<dbReference type="EMBL" id="AF303741">
    <property type="protein sequence ID" value="AAB94473.1"/>
    <property type="molecule type" value="Genomic_DNA"/>
</dbReference>
<dbReference type="PIR" id="T03175">
    <property type="entry name" value="T03175"/>
</dbReference>
<dbReference type="RefSeq" id="NP_149632.1">
    <property type="nucleotide sequence ID" value="NC_003038.1"/>
</dbReference>
<dbReference type="SMR" id="O55762"/>
<dbReference type="KEGG" id="vg:1733181"/>
<dbReference type="Proteomes" id="UP000001359">
    <property type="component" value="Genome"/>
</dbReference>
<dbReference type="GO" id="GO:0016020">
    <property type="term" value="C:membrane"/>
    <property type="evidence" value="ECO:0007669"/>
    <property type="project" value="UniProtKB-SubCell"/>
</dbReference>
<proteinExistence type="predicted"/>
<reference key="1">
    <citation type="journal article" date="2001" name="Virology">
        <title>Analysis of the first complete DNA sequence of an invertebrate iridovirus: coding strategy of the genome of Chilo iridescent virus.</title>
        <authorList>
            <person name="Jakob N.J."/>
            <person name="Mueller K."/>
            <person name="Bahr U."/>
            <person name="Darai G."/>
        </authorList>
    </citation>
    <scope>NUCLEOTIDE SEQUENCE [LARGE SCALE GENOMIC DNA]</scope>
</reference>
<reference key="2">
    <citation type="journal article" date="2007" name="Virol. J.">
        <title>Comparative genomic analysis of the family Iridoviridae: re-annotating and defining the core set of iridovirus genes.</title>
        <authorList>
            <person name="Eaton H.E."/>
            <person name="Metcalf J."/>
            <person name="Penny E."/>
            <person name="Tcherepanov V."/>
            <person name="Upton C."/>
            <person name="Brunetti C.R."/>
        </authorList>
    </citation>
    <scope>GENOME REANNOTATION</scope>
</reference>
<evidence type="ECO:0000255" key="1"/>
<evidence type="ECO:0000305" key="2"/>
<sequence length="132" mass="15561">MFSNISNQKLVLFFTIILIALCPFVYYLWDNEILGIGNWGRKRKDTFEDKNCSTEIEHAIEEHKRKNKEKKEAKEKRLAPGRVKISTYDVNNENYLLGDVNDELQPNIPGYLTKETAYPFDCEPDDRSNRWL</sequence>
<organism>
    <name type="scientific">Invertebrate iridescent virus 6</name>
    <name type="common">IIV-6</name>
    <name type="synonym">Chilo iridescent virus</name>
    <dbReference type="NCBI Taxonomy" id="176652"/>
    <lineage>
        <taxon>Viruses</taxon>
        <taxon>Varidnaviria</taxon>
        <taxon>Bamfordvirae</taxon>
        <taxon>Nucleocytoviricota</taxon>
        <taxon>Megaviricetes</taxon>
        <taxon>Pimascovirales</taxon>
        <taxon>Iridoviridae</taxon>
        <taxon>Betairidovirinae</taxon>
        <taxon>Iridovirus</taxon>
    </lineage>
</organism>
<gene>
    <name type="ORF">IIV6-169L</name>
</gene>
<feature type="chain" id="PRO_0000378018" description="Uncharacterized protein 169L">
    <location>
        <begin position="1"/>
        <end position="132"/>
    </location>
</feature>
<feature type="transmembrane region" description="Helical" evidence="1">
    <location>
        <begin position="10"/>
        <end position="30"/>
    </location>
</feature>
<feature type="coiled-coil region" evidence="1">
    <location>
        <begin position="50"/>
        <end position="79"/>
    </location>
</feature>
<accession>O55762</accession>
<organismHost>
    <name type="scientific">Acheta domesticus</name>
    <name type="common">House cricket</name>
    <dbReference type="NCBI Taxonomy" id="6997"/>
</organismHost>
<organismHost>
    <name type="scientific">Chilo suppressalis</name>
    <name type="common">Asiatic rice borer moth</name>
    <dbReference type="NCBI Taxonomy" id="168631"/>
</organismHost>
<organismHost>
    <name type="scientific">Gryllus bimaculatus</name>
    <name type="common">Two-spotted cricket</name>
    <dbReference type="NCBI Taxonomy" id="6999"/>
</organismHost>
<organismHost>
    <name type="scientific">Gryllus campestris</name>
    <dbReference type="NCBI Taxonomy" id="58607"/>
</organismHost>
<organismHost>
    <name type="scientific">Spodoptera frugiperda</name>
    <name type="common">Fall armyworm</name>
    <dbReference type="NCBI Taxonomy" id="7108"/>
</organismHost>
<protein>
    <recommendedName>
        <fullName>Uncharacterized protein 169L</fullName>
    </recommendedName>
</protein>
<comment type="subcellular location">
    <subcellularLocation>
        <location evidence="2">Membrane</location>
        <topology evidence="2">Single-pass membrane protein</topology>
    </subcellularLocation>
</comment>
<keyword id="KW-0175">Coiled coil</keyword>
<keyword id="KW-0472">Membrane</keyword>
<keyword id="KW-1185">Reference proteome</keyword>
<keyword id="KW-0812">Transmembrane</keyword>
<keyword id="KW-1133">Transmembrane helix</keyword>
<name>169L_IIV6</name>